<evidence type="ECO:0000250" key="1"/>
<evidence type="ECO:0000250" key="2">
    <source>
        <dbReference type="UniProtKB" id="P0A9J8"/>
    </source>
</evidence>
<evidence type="ECO:0000250" key="3">
    <source>
        <dbReference type="UniProtKB" id="P57472"/>
    </source>
</evidence>
<evidence type="ECO:0000255" key="4">
    <source>
        <dbReference type="PROSITE-ProRule" id="PRU00515"/>
    </source>
</evidence>
<evidence type="ECO:0000255" key="5">
    <source>
        <dbReference type="PROSITE-ProRule" id="PRU00517"/>
    </source>
</evidence>
<feature type="chain" id="PRO_0000119184" description="Bifunctional chorismate mutase/prephenate dehydratase">
    <location>
        <begin position="1"/>
        <end position="371"/>
    </location>
</feature>
<feature type="domain" description="Chorismate mutase" evidence="4">
    <location>
        <begin position="1"/>
        <end position="92"/>
    </location>
</feature>
<feature type="domain" description="Prephenate dehydratase" evidence="5">
    <location>
        <begin position="104"/>
        <end position="284"/>
    </location>
</feature>
<feature type="region of interest" description="Regulatory" evidence="1">
    <location>
        <begin position="285"/>
        <end position="371"/>
    </location>
</feature>
<feature type="binding site" evidence="2">
    <location>
        <position position="11"/>
    </location>
    <ligand>
        <name>substrate</name>
    </ligand>
</feature>
<feature type="binding site" evidence="2">
    <location>
        <position position="28"/>
    </location>
    <ligand>
        <name>substrate</name>
    </ligand>
</feature>
<feature type="binding site" evidence="2">
    <location>
        <position position="39"/>
    </location>
    <ligand>
        <name>substrate</name>
    </ligand>
</feature>
<feature type="binding site" evidence="2">
    <location>
        <position position="48"/>
    </location>
    <ligand>
        <name>substrate</name>
    </ligand>
</feature>
<feature type="binding site" evidence="2">
    <location>
        <position position="52"/>
    </location>
    <ligand>
        <name>substrate</name>
    </ligand>
</feature>
<feature type="binding site" evidence="2">
    <location>
        <position position="84"/>
    </location>
    <ligand>
        <name>substrate</name>
    </ligand>
</feature>
<feature type="binding site" evidence="2">
    <location>
        <position position="88"/>
    </location>
    <ligand>
        <name>substrate</name>
    </ligand>
</feature>
<feature type="site" description="Essential for prephenate dehydratase activity" evidence="1">
    <location>
        <position position="277"/>
    </location>
</feature>
<comment type="function">
    <text evidence="2">Catalyzes the Claisen rearrangement of chorismate to prephenate and the decarboxylation/dehydration of prephenate to phenylpyruvate.</text>
</comment>
<comment type="catalytic activity">
    <reaction evidence="2">
        <text>chorismate = prephenate</text>
        <dbReference type="Rhea" id="RHEA:13897"/>
        <dbReference type="ChEBI" id="CHEBI:29748"/>
        <dbReference type="ChEBI" id="CHEBI:29934"/>
        <dbReference type="EC" id="5.4.99.5"/>
    </reaction>
</comment>
<comment type="catalytic activity">
    <reaction evidence="2">
        <text>prephenate + H(+) = 3-phenylpyruvate + CO2 + H2O</text>
        <dbReference type="Rhea" id="RHEA:21648"/>
        <dbReference type="ChEBI" id="CHEBI:15377"/>
        <dbReference type="ChEBI" id="CHEBI:15378"/>
        <dbReference type="ChEBI" id="CHEBI:16526"/>
        <dbReference type="ChEBI" id="CHEBI:18005"/>
        <dbReference type="ChEBI" id="CHEBI:29934"/>
        <dbReference type="EC" id="4.2.1.51"/>
    </reaction>
</comment>
<comment type="pathway">
    <text evidence="2">Amino-acid biosynthesis; L-phenylalanine biosynthesis; phenylpyruvate from prephenate: step 1/1.</text>
</comment>
<comment type="pathway">
    <text evidence="2">Metabolic intermediate biosynthesis; prephenate biosynthesis; prephenate from chorismate: step 1/1.</text>
</comment>
<comment type="subcellular location">
    <subcellularLocation>
        <location evidence="2">Cytoplasm</location>
    </subcellularLocation>
</comment>
<comment type="domain">
    <text evidence="3">The regulatory domain shows changes in the ESRP sequence, which is involved in the allosteric binding of phenylalanine. These changes suggest the desensitization of the enzyme to inhibition by phenylalanine and would permit the overproduction of phenylalanine.</text>
</comment>
<keyword id="KW-0021">Allosteric enzyme</keyword>
<keyword id="KW-0028">Amino-acid biosynthesis</keyword>
<keyword id="KW-0057">Aromatic amino acid biosynthesis</keyword>
<keyword id="KW-0963">Cytoplasm</keyword>
<keyword id="KW-0413">Isomerase</keyword>
<keyword id="KW-0456">Lyase</keyword>
<keyword id="KW-0511">Multifunctional enzyme</keyword>
<keyword id="KW-0584">Phenylalanine biosynthesis</keyword>
<keyword id="KW-1185">Reference proteome</keyword>
<name>CMPDT_BUCBP</name>
<protein>
    <recommendedName>
        <fullName evidence="2">Bifunctional chorismate mutase/prephenate dehydratase</fullName>
    </recommendedName>
    <alternativeName>
        <fullName evidence="2">Chorismate mutase-prephenate dehydratase</fullName>
    </alternativeName>
    <alternativeName>
        <fullName evidence="2">P-protein</fullName>
    </alternativeName>
    <domain>
        <recommendedName>
            <fullName evidence="2">Chorismate mutase</fullName>
            <shortName evidence="2">CM</shortName>
            <ecNumber evidence="2">5.4.99.5</ecNumber>
        </recommendedName>
    </domain>
    <domain>
        <recommendedName>
            <fullName evidence="2">Prephenate dehydratase</fullName>
            <shortName evidence="2">PDT</shortName>
            <ecNumber evidence="2">4.2.1.51</ecNumber>
        </recommendedName>
    </domain>
</protein>
<sequence length="371" mass="43136">MTLKNALLAFRNAINILDKNLINLLAKRKQLSLNIAHTKVKNNYPVRDIEREQMLLKNLTILGEKHFLNKKYIESLFSIILEDSVLTQKKWIKKYNLNKYKLEKISFLGSFGSYSHLAAQKYAKKHSKILTDKIYKNFSDVITSVEQQQSTYAILPIENQSSGLIIEVYKLLQKTPLFIIGNIYIHANHCLLAKKYTPILKIQKIYSHIQPFKQCSKFISLFPNWKLSNTTSTSEAIQHVAKENDNTIAALGNESYGELNKLEVIAKNISNKRNNITQFIILAQKKTYITNKKTHLKTIILISKKNENCEKIIRNILHKNKITLLKLKYYVTSKVLLEKIFFIEIENIYCIKHILKQFTIEIKCIKILGCF</sequence>
<dbReference type="EC" id="5.4.99.5" evidence="2"/>
<dbReference type="EC" id="4.2.1.51" evidence="2"/>
<dbReference type="EMBL" id="AE016826">
    <property type="protein sequence ID" value="AAO27074.1"/>
    <property type="molecule type" value="Genomic_DNA"/>
</dbReference>
<dbReference type="RefSeq" id="WP_011091475.1">
    <property type="nucleotide sequence ID" value="NC_004545.1"/>
</dbReference>
<dbReference type="SMR" id="Q89AE5"/>
<dbReference type="STRING" id="224915.bbp_355"/>
<dbReference type="KEGG" id="bab:bbp_355"/>
<dbReference type="eggNOG" id="COG0077">
    <property type="taxonomic scope" value="Bacteria"/>
</dbReference>
<dbReference type="eggNOG" id="COG1605">
    <property type="taxonomic scope" value="Bacteria"/>
</dbReference>
<dbReference type="HOGENOM" id="CLU_035008_1_0_6"/>
<dbReference type="OrthoDB" id="9802281at2"/>
<dbReference type="UniPathway" id="UPA00120">
    <property type="reaction ID" value="UER00203"/>
</dbReference>
<dbReference type="UniPathway" id="UPA00121">
    <property type="reaction ID" value="UER00345"/>
</dbReference>
<dbReference type="Proteomes" id="UP000000601">
    <property type="component" value="Chromosome"/>
</dbReference>
<dbReference type="GO" id="GO:0005737">
    <property type="term" value="C:cytoplasm"/>
    <property type="evidence" value="ECO:0007669"/>
    <property type="project" value="UniProtKB-SubCell"/>
</dbReference>
<dbReference type="GO" id="GO:0004106">
    <property type="term" value="F:chorismate mutase activity"/>
    <property type="evidence" value="ECO:0007669"/>
    <property type="project" value="UniProtKB-EC"/>
</dbReference>
<dbReference type="GO" id="GO:0004664">
    <property type="term" value="F:prephenate dehydratase activity"/>
    <property type="evidence" value="ECO:0007669"/>
    <property type="project" value="UniProtKB-EC"/>
</dbReference>
<dbReference type="GO" id="GO:0046417">
    <property type="term" value="P:chorismate metabolic process"/>
    <property type="evidence" value="ECO:0007669"/>
    <property type="project" value="InterPro"/>
</dbReference>
<dbReference type="GO" id="GO:0009094">
    <property type="term" value="P:L-phenylalanine biosynthetic process"/>
    <property type="evidence" value="ECO:0007669"/>
    <property type="project" value="UniProtKB-UniPathway"/>
</dbReference>
<dbReference type="CDD" id="cd13631">
    <property type="entry name" value="PBP2_Ct-PDT_like"/>
    <property type="match status" value="1"/>
</dbReference>
<dbReference type="Gene3D" id="1.20.59.10">
    <property type="entry name" value="Chorismate mutase"/>
    <property type="match status" value="1"/>
</dbReference>
<dbReference type="Gene3D" id="3.40.190.10">
    <property type="entry name" value="Periplasmic binding protein-like II"/>
    <property type="match status" value="2"/>
</dbReference>
<dbReference type="InterPro" id="IPR008242">
    <property type="entry name" value="Chor_mutase/pphenate_deHydtase"/>
</dbReference>
<dbReference type="InterPro" id="IPR036263">
    <property type="entry name" value="Chorismate_II_sf"/>
</dbReference>
<dbReference type="InterPro" id="IPR036979">
    <property type="entry name" value="CM_dom_sf"/>
</dbReference>
<dbReference type="InterPro" id="IPR002701">
    <property type="entry name" value="CM_II_prokaryot"/>
</dbReference>
<dbReference type="InterPro" id="IPR010952">
    <property type="entry name" value="CM_P_1"/>
</dbReference>
<dbReference type="InterPro" id="IPR001086">
    <property type="entry name" value="Preph_deHydtase"/>
</dbReference>
<dbReference type="NCBIfam" id="TIGR01797">
    <property type="entry name" value="CM_P_1"/>
    <property type="match status" value="1"/>
</dbReference>
<dbReference type="PANTHER" id="PTHR21022">
    <property type="entry name" value="PREPHENATE DEHYDRATASE P PROTEIN"/>
    <property type="match status" value="1"/>
</dbReference>
<dbReference type="PANTHER" id="PTHR21022:SF19">
    <property type="entry name" value="PREPHENATE DEHYDRATASE-RELATED"/>
    <property type="match status" value="1"/>
</dbReference>
<dbReference type="Pfam" id="PF01817">
    <property type="entry name" value="CM_2"/>
    <property type="match status" value="1"/>
</dbReference>
<dbReference type="Pfam" id="PF00800">
    <property type="entry name" value="PDT"/>
    <property type="match status" value="1"/>
</dbReference>
<dbReference type="PIRSF" id="PIRSF001500">
    <property type="entry name" value="Chor_mut_pdt_Ppr"/>
    <property type="match status" value="1"/>
</dbReference>
<dbReference type="SMART" id="SM00830">
    <property type="entry name" value="CM_2"/>
    <property type="match status" value="1"/>
</dbReference>
<dbReference type="SUPFAM" id="SSF48600">
    <property type="entry name" value="Chorismate mutase II"/>
    <property type="match status" value="1"/>
</dbReference>
<dbReference type="SUPFAM" id="SSF53850">
    <property type="entry name" value="Periplasmic binding protein-like II"/>
    <property type="match status" value="1"/>
</dbReference>
<dbReference type="PROSITE" id="PS51168">
    <property type="entry name" value="CHORISMATE_MUT_2"/>
    <property type="match status" value="1"/>
</dbReference>
<dbReference type="PROSITE" id="PS51171">
    <property type="entry name" value="PREPHENATE_DEHYDR_3"/>
    <property type="match status" value="1"/>
</dbReference>
<gene>
    <name type="primary">pheA</name>
    <name type="ordered locus">bbp_355</name>
</gene>
<accession>Q89AE5</accession>
<proteinExistence type="inferred from homology"/>
<reference key="1">
    <citation type="journal article" date="2003" name="Proc. Natl. Acad. Sci. U.S.A.">
        <title>Reductive genome evolution in Buchnera aphidicola.</title>
        <authorList>
            <person name="van Ham R.C.H.J."/>
            <person name="Kamerbeek J."/>
            <person name="Palacios C."/>
            <person name="Rausell C."/>
            <person name="Abascal F."/>
            <person name="Bastolla U."/>
            <person name="Fernandez J.M."/>
            <person name="Jimenez L."/>
            <person name="Postigo M."/>
            <person name="Silva F.J."/>
            <person name="Tamames J."/>
            <person name="Viguera E."/>
            <person name="Latorre A."/>
            <person name="Valencia A."/>
            <person name="Moran F."/>
            <person name="Moya A."/>
        </authorList>
    </citation>
    <scope>NUCLEOTIDE SEQUENCE [LARGE SCALE GENOMIC DNA]</scope>
    <source>
        <strain>Bp</strain>
    </source>
</reference>
<organism>
    <name type="scientific">Buchnera aphidicola subsp. Baizongia pistaciae (strain Bp)</name>
    <dbReference type="NCBI Taxonomy" id="224915"/>
    <lineage>
        <taxon>Bacteria</taxon>
        <taxon>Pseudomonadati</taxon>
        <taxon>Pseudomonadota</taxon>
        <taxon>Gammaproteobacteria</taxon>
        <taxon>Enterobacterales</taxon>
        <taxon>Erwiniaceae</taxon>
        <taxon>Buchnera</taxon>
    </lineage>
</organism>